<reference key="1">
    <citation type="journal article" date="2011" name="Genome Biol.">
        <title>Genome sequence of the insect pathogenic fungus Cordyceps militaris, a valued traditional Chinese medicine.</title>
        <authorList>
            <person name="Zheng P."/>
            <person name="Xia Y."/>
            <person name="Xiao G."/>
            <person name="Xiong C."/>
            <person name="Hu X."/>
            <person name="Zhang S."/>
            <person name="Zheng H."/>
            <person name="Huang Y."/>
            <person name="Zhou Y."/>
            <person name="Wang S."/>
            <person name="Zhao G.-P."/>
            <person name="Liu X."/>
            <person name="St Leger R.J."/>
            <person name="Wang C."/>
        </authorList>
    </citation>
    <scope>NUCLEOTIDE SEQUENCE [LARGE SCALE GENOMIC DNA]</scope>
    <source>
        <strain>CM01</strain>
    </source>
</reference>
<reference key="2">
    <citation type="journal article" date="2004" name="Proc. Natl. Acad. Sci. U.S.A.">
        <title>Antiatherogenic activity of fungal beauveriolides, inhibitors of lipid droplet accumulation in macrophages.</title>
        <authorList>
            <person name="Namatame I."/>
            <person name="Tomoda H."/>
            <person name="Ishibashi S."/>
            <person name="Omura S."/>
        </authorList>
    </citation>
    <scope>BIOTECHNOLOGY</scope>
</reference>
<reference key="3">
    <citation type="journal article" date="2009" name="ChemBioChem">
        <title>The natural products beauveriolide I and III: a new class of beta-amyloid-lowering compounds.</title>
        <authorList>
            <person name="Witter D.P."/>
            <person name="Chen Y."/>
            <person name="Rogel J.K."/>
            <person name="Boldt G.E."/>
            <person name="Wentworth P. Jr."/>
        </authorList>
    </citation>
    <scope>BIOTECHNOLOGY</scope>
</reference>
<reference key="4">
    <citation type="journal article" date="2009" name="Chem. Pharm. Bull.">
        <title>The selectivity of beauveriolide derivatives in inhibition toward the two isozymes of acyl-CoA: cholesterol acyltransferase.</title>
        <authorList>
            <person name="Ohshiro T."/>
            <person name="Matsuda D."/>
            <person name="Nagai K."/>
            <person name="Doi T."/>
            <person name="Sunazuka T."/>
            <person name="Takahashi T."/>
            <person name="Rudel L.L."/>
            <person name="Omura S."/>
            <person name="Tomoda H."/>
        </authorList>
    </citation>
    <scope>BIOTECHNOLOGY</scope>
</reference>
<reference key="5">
    <citation type="journal article" date="2020" name="J. Biotechnol.">
        <title>Genome mining and biosynthesis of the Acyl-CoA:cholesterol acyltransferase inhibitor beauveriolide I and III in Cordyceps militaris.</title>
        <authorList>
            <person name="Wang X."/>
            <person name="Gao Y.L."/>
            <person name="Zhang M.L."/>
            <person name="Zhang H.D."/>
            <person name="Huang J.Z."/>
            <person name="Li L."/>
        </authorList>
    </citation>
    <scope>FUNCTION</scope>
    <scope>PATHWAY</scope>
</reference>
<organism>
    <name type="scientific">Cordyceps militaris (strain CM01)</name>
    <name type="common">Caterpillar fungus</name>
    <dbReference type="NCBI Taxonomy" id="983644"/>
    <lineage>
        <taxon>Eukaryota</taxon>
        <taxon>Fungi</taxon>
        <taxon>Dikarya</taxon>
        <taxon>Ascomycota</taxon>
        <taxon>Pezizomycotina</taxon>
        <taxon>Sordariomycetes</taxon>
        <taxon>Hypocreomycetidae</taxon>
        <taxon>Hypocreales</taxon>
        <taxon>Cordycipitaceae</taxon>
        <taxon>Cordyceps</taxon>
    </lineage>
</organism>
<comment type="function">
    <text evidence="5 8">Acyltransferase; part of the gene cluster that mediates the biosynthesis of beauveriolides I and III, cyclodepsipeptides acting as inhibitors of the acyl-CoA:cholesterol acyltransferase (PubMed:31926180). The HR-PKS cm3B initiates the biosynthesis of beauveriolides by iteratively catalyzing the formation of the linear polyketide chain (Probable). The ATP-dependent acetyl-CoA ligase cm3D converts the polyketide carboxylic acid to a CoA thioester which id shuttled to the first T domain in the NRPS cm3A by the acetyltransferase cm3C (Probable). Cm3A contains 13 domains and assembles the polyketide chain, L-phenylalanine, L-alanine, and D-leucine (or D-allo-isoleucine) to form beauveriolide I (or beauveriolide III). The production of both beauveriolides I and III suggests the substrate adaptability of cm3B, using different amino acids as substrates (Probable).</text>
</comment>
<comment type="pathway">
    <text evidence="5">Secondary metabolite biosynthesis.</text>
</comment>
<comment type="subunit">
    <text evidence="1">Monomer.</text>
</comment>
<comment type="biotechnology">
    <text evidence="2 3 4">Beauveriolides inhibit selectively the acyl-CoA:cholesterol acyl-transferases (ACATs), leading to blocking the synthesis of cholesteryl esters and decreasing the cholesterol concentration, which suggests that beauveriolides are promising as potential lead compounds for antiatherosclerotic agents (PubMed:14718664, PubMed:19336931). Moreover, this activity correlates with inhibitory activities of beauveriolides in the secretion of amyloid-beta-peptide, which suggests that beauveriolides may be an attractive new candidate for the treatment of Alzheimer's disease (PubMed:19396893).</text>
</comment>
<comment type="similarity">
    <text evidence="7">Belongs to the plant acyltransferase family.</text>
</comment>
<protein>
    <recommendedName>
        <fullName evidence="6">Acyltransferase cm3D</fullName>
        <ecNumber evidence="8">2.3.1.-</ecNumber>
    </recommendedName>
    <alternativeName>
        <fullName evidence="6">Beauveriolides biosynthesis cluster protein D</fullName>
    </alternativeName>
    <alternativeName>
        <fullName evidence="6">Cyclodepsipeptides cm3 biosynthesis cluster protein D</fullName>
    </alternativeName>
</protein>
<name>CM3D_CORMM</name>
<keyword id="KW-0012">Acyltransferase</keyword>
<keyword id="KW-1185">Reference proteome</keyword>
<keyword id="KW-0808">Transferase</keyword>
<sequence>MECTTVKLSVALGEEVVQLSTLDQQAQRAYANLLLVFKLSQNADADHVFSSLKRGLGAALTEVPDFASLVVPVPGSKKNELQLRLGPDSGVPFKLVRQDALASHLEKHSSGGTYAELARDNFPLASVPTELLFNQLPASELACARGLPGLLAQASVVDGGLIMGLSWHHTVSDARGINTLLSSWARHTKMWAGQGTIGSPSAAPEPTRDRWRLTCGPRDVHVSHFSDYQINAAARTPLSPAAAHLLDRPDTTNATAGLSTWYFSKKALSSLRGELGRAAADGSDAVQFTSGEAVSALVWKHLSLARLLHQQLAHETSLFASRIDFRGRAKPAFADGYIGNINEPNARTRMRLAEVCAPSSPASLVALAAAVREAIGAMDEKTMREFIGLVEGSSSVTDVYWDYNTFPGPDLVVTDMSGMDTLRQEWGGDLGQPVCIRSGSREKGVAYFLPQDAQGGFEVQLQCTAEDLGRLKDDSLFTKYAEFRS</sequence>
<dbReference type="EC" id="2.3.1.-" evidence="8"/>
<dbReference type="EMBL" id="JH126399">
    <property type="protein sequence ID" value="EGX96625.1"/>
    <property type="molecule type" value="Genomic_DNA"/>
</dbReference>
<dbReference type="RefSeq" id="XP_006666502.1">
    <property type="nucleotide sequence ID" value="XM_006666439.1"/>
</dbReference>
<dbReference type="SMR" id="G3J454"/>
<dbReference type="FunCoup" id="G3J454">
    <property type="interactions" value="55"/>
</dbReference>
<dbReference type="STRING" id="983644.G3J454"/>
<dbReference type="GeneID" id="18163314"/>
<dbReference type="KEGG" id="cmt:CCM_01283"/>
<dbReference type="VEuPathDB" id="FungiDB:CCM_01283"/>
<dbReference type="eggNOG" id="ENOG502RS7Z">
    <property type="taxonomic scope" value="Eukaryota"/>
</dbReference>
<dbReference type="HOGENOM" id="CLU_026450_1_0_1"/>
<dbReference type="InParanoid" id="G3J454"/>
<dbReference type="OMA" id="WGKPESV"/>
<dbReference type="OrthoDB" id="1862401at2759"/>
<dbReference type="Proteomes" id="UP000001610">
    <property type="component" value="Unassembled WGS sequence"/>
</dbReference>
<dbReference type="GO" id="GO:0016747">
    <property type="term" value="F:acyltransferase activity, transferring groups other than amino-acyl groups"/>
    <property type="evidence" value="ECO:0007669"/>
    <property type="project" value="TreeGrafter"/>
</dbReference>
<dbReference type="Gene3D" id="3.30.559.10">
    <property type="entry name" value="Chloramphenicol acetyltransferase-like domain"/>
    <property type="match status" value="2"/>
</dbReference>
<dbReference type="InterPro" id="IPR023213">
    <property type="entry name" value="CAT-like_dom_sf"/>
</dbReference>
<dbReference type="InterPro" id="IPR050317">
    <property type="entry name" value="Plant_Fungal_Acyltransferase"/>
</dbReference>
<dbReference type="PANTHER" id="PTHR31642:SF315">
    <property type="entry name" value="ACYLTRANSFERASE EASC"/>
    <property type="match status" value="1"/>
</dbReference>
<dbReference type="PANTHER" id="PTHR31642">
    <property type="entry name" value="TRICHOTHECENE 3-O-ACETYLTRANSFERASE"/>
    <property type="match status" value="1"/>
</dbReference>
<dbReference type="Pfam" id="PF02458">
    <property type="entry name" value="Transferase"/>
    <property type="match status" value="1"/>
</dbReference>
<evidence type="ECO:0000250" key="1">
    <source>
        <dbReference type="UniProtKB" id="Q70PR7"/>
    </source>
</evidence>
<evidence type="ECO:0000269" key="2">
    <source>
    </source>
</evidence>
<evidence type="ECO:0000269" key="3">
    <source>
    </source>
</evidence>
<evidence type="ECO:0000269" key="4">
    <source>
    </source>
</evidence>
<evidence type="ECO:0000269" key="5">
    <source>
    </source>
</evidence>
<evidence type="ECO:0000303" key="6">
    <source>
    </source>
</evidence>
<evidence type="ECO:0000305" key="7"/>
<evidence type="ECO:0000305" key="8">
    <source>
    </source>
</evidence>
<accession>G3J454</accession>
<feature type="chain" id="PRO_0000449819" description="Acyltransferase cm3D">
    <location>
        <begin position="1"/>
        <end position="485"/>
    </location>
</feature>
<feature type="active site" description="Proton acceptor" evidence="1">
    <location>
        <position position="169"/>
    </location>
</feature>
<gene>
    <name evidence="6" type="primary">cm3D</name>
    <name type="ORF">CCM_01283</name>
</gene>
<proteinExistence type="evidence at protein level"/>